<comment type="function">
    <text evidence="1">Involved in the oxidation of myo-inositol (MI) to 2-keto-myo-inositol (2KMI or 2-inosose).</text>
</comment>
<comment type="catalytic activity">
    <reaction evidence="1">
        <text>myo-inositol + NAD(+) = scyllo-inosose + NADH + H(+)</text>
        <dbReference type="Rhea" id="RHEA:16949"/>
        <dbReference type="ChEBI" id="CHEBI:15378"/>
        <dbReference type="ChEBI" id="CHEBI:17268"/>
        <dbReference type="ChEBI" id="CHEBI:17811"/>
        <dbReference type="ChEBI" id="CHEBI:57540"/>
        <dbReference type="ChEBI" id="CHEBI:57945"/>
        <dbReference type="EC" id="1.1.1.18"/>
    </reaction>
</comment>
<comment type="subunit">
    <text evidence="1">Homotetramer.</text>
</comment>
<comment type="similarity">
    <text evidence="1">Belongs to the Gfo/Idh/MocA family.</text>
</comment>
<gene>
    <name evidence="1" type="primary">iolG</name>
    <name type="ordered locus">Lxx24320</name>
</gene>
<name>IOLG_LEIXX</name>
<evidence type="ECO:0000255" key="1">
    <source>
        <dbReference type="HAMAP-Rule" id="MF_01671"/>
    </source>
</evidence>
<accession>Q6AC27</accession>
<protein>
    <recommendedName>
        <fullName evidence="1">Inositol 2-dehydrogenase</fullName>
        <ecNumber evidence="1">1.1.1.18</ecNumber>
    </recommendedName>
    <alternativeName>
        <fullName evidence="1">Myo-inositol 2-dehydrogenase</fullName>
        <shortName evidence="1">MI 2-dehydrogenase</shortName>
    </alternativeName>
</protein>
<reference key="1">
    <citation type="journal article" date="2004" name="Mol. Plant Microbe Interact.">
        <title>The genome sequence of the Gram-positive sugarcane pathogen Leifsonia xyli subsp. xyli.</title>
        <authorList>
            <person name="Monteiro-Vitorello C.B."/>
            <person name="Camargo L.E.A."/>
            <person name="Van Sluys M.A."/>
            <person name="Kitajima J.P."/>
            <person name="Truffi D."/>
            <person name="do Amaral A.M."/>
            <person name="Harakava R."/>
            <person name="de Oliveira J.C.F."/>
            <person name="Wood D."/>
            <person name="de Oliveira M.C."/>
            <person name="Miyaki C.Y."/>
            <person name="Takita M.A."/>
            <person name="da Silva A.C.R."/>
            <person name="Furlan L.R."/>
            <person name="Carraro D.M."/>
            <person name="Camarotte G."/>
            <person name="Almeida N.F. Jr."/>
            <person name="Carrer H."/>
            <person name="Coutinho L.L."/>
            <person name="El-Dorry H.A."/>
            <person name="Ferro M.I.T."/>
            <person name="Gagliardi P.R."/>
            <person name="Giglioti E."/>
            <person name="Goldman M.H.S."/>
            <person name="Goldman G.H."/>
            <person name="Kimura E.T."/>
            <person name="Ferro E.S."/>
            <person name="Kuramae E.E."/>
            <person name="Lemos E.G.M."/>
            <person name="Lemos M.V.F."/>
            <person name="Mauro S.M.Z."/>
            <person name="Machado M.A."/>
            <person name="Marino C.L."/>
            <person name="Menck C.F."/>
            <person name="Nunes L.R."/>
            <person name="Oliveira R.C."/>
            <person name="Pereira G.G."/>
            <person name="Siqueira W."/>
            <person name="de Souza A.A."/>
            <person name="Tsai S.M."/>
            <person name="Zanca A.S."/>
            <person name="Simpson A.J.G."/>
            <person name="Brumbley S.M."/>
            <person name="Setubal J.C."/>
        </authorList>
    </citation>
    <scope>NUCLEOTIDE SEQUENCE [LARGE SCALE GENOMIC DNA]</scope>
    <source>
        <strain>CTCB07</strain>
    </source>
</reference>
<organism>
    <name type="scientific">Leifsonia xyli subsp. xyli (strain CTCB07)</name>
    <dbReference type="NCBI Taxonomy" id="281090"/>
    <lineage>
        <taxon>Bacteria</taxon>
        <taxon>Bacillati</taxon>
        <taxon>Actinomycetota</taxon>
        <taxon>Actinomycetes</taxon>
        <taxon>Micrococcales</taxon>
        <taxon>Microbacteriaceae</taxon>
        <taxon>Leifsonia</taxon>
    </lineage>
</organism>
<keyword id="KW-0520">NAD</keyword>
<keyword id="KW-0560">Oxidoreductase</keyword>
<keyword id="KW-1185">Reference proteome</keyword>
<dbReference type="EC" id="1.1.1.18" evidence="1"/>
<dbReference type="EMBL" id="AE016822">
    <property type="protein sequence ID" value="AAT90065.1"/>
    <property type="molecule type" value="Genomic_DNA"/>
</dbReference>
<dbReference type="RefSeq" id="WP_011187044.1">
    <property type="nucleotide sequence ID" value="NC_006087.1"/>
</dbReference>
<dbReference type="SMR" id="Q6AC27"/>
<dbReference type="STRING" id="281090.Lxx24320"/>
<dbReference type="KEGG" id="lxx:Lxx24320"/>
<dbReference type="eggNOG" id="COG0673">
    <property type="taxonomic scope" value="Bacteria"/>
</dbReference>
<dbReference type="HOGENOM" id="CLU_023194_0_1_11"/>
<dbReference type="Proteomes" id="UP000001306">
    <property type="component" value="Chromosome"/>
</dbReference>
<dbReference type="GO" id="GO:0050112">
    <property type="term" value="F:inositol 2-dehydrogenase (NAD+) activity"/>
    <property type="evidence" value="ECO:0007669"/>
    <property type="project" value="UniProtKB-UniRule"/>
</dbReference>
<dbReference type="GO" id="GO:0000166">
    <property type="term" value="F:nucleotide binding"/>
    <property type="evidence" value="ECO:0007669"/>
    <property type="project" value="InterPro"/>
</dbReference>
<dbReference type="GO" id="GO:0019310">
    <property type="term" value="P:inositol catabolic process"/>
    <property type="evidence" value="ECO:0007669"/>
    <property type="project" value="UniProtKB-UniRule"/>
</dbReference>
<dbReference type="Gene3D" id="3.30.360.10">
    <property type="entry name" value="Dihydrodipicolinate Reductase, domain 2"/>
    <property type="match status" value="1"/>
</dbReference>
<dbReference type="Gene3D" id="3.40.50.720">
    <property type="entry name" value="NAD(P)-binding Rossmann-like Domain"/>
    <property type="match status" value="1"/>
</dbReference>
<dbReference type="HAMAP" id="MF_01671">
    <property type="entry name" value="IolG"/>
    <property type="match status" value="1"/>
</dbReference>
<dbReference type="InterPro" id="IPR050424">
    <property type="entry name" value="Gfo-Idh-MocA_inositol_DH"/>
</dbReference>
<dbReference type="InterPro" id="IPR000683">
    <property type="entry name" value="Gfo/Idh/MocA-like_OxRdtase_N"/>
</dbReference>
<dbReference type="InterPro" id="IPR055170">
    <property type="entry name" value="GFO_IDH_MocA-like_dom"/>
</dbReference>
<dbReference type="InterPro" id="IPR023794">
    <property type="entry name" value="MI/DCI_dehydrogenase"/>
</dbReference>
<dbReference type="InterPro" id="IPR036291">
    <property type="entry name" value="NAD(P)-bd_dom_sf"/>
</dbReference>
<dbReference type="PANTHER" id="PTHR43593">
    <property type="match status" value="1"/>
</dbReference>
<dbReference type="PANTHER" id="PTHR43593:SF1">
    <property type="entry name" value="INOSITOL 2-DEHYDROGENASE"/>
    <property type="match status" value="1"/>
</dbReference>
<dbReference type="Pfam" id="PF01408">
    <property type="entry name" value="GFO_IDH_MocA"/>
    <property type="match status" value="1"/>
</dbReference>
<dbReference type="Pfam" id="PF22725">
    <property type="entry name" value="GFO_IDH_MocA_C3"/>
    <property type="match status" value="1"/>
</dbReference>
<dbReference type="SUPFAM" id="SSF55347">
    <property type="entry name" value="Glyceraldehyde-3-phosphate dehydrogenase-like, C-terminal domain"/>
    <property type="match status" value="1"/>
</dbReference>
<dbReference type="SUPFAM" id="SSF51735">
    <property type="entry name" value="NAD(P)-binding Rossmann-fold domains"/>
    <property type="match status" value="1"/>
</dbReference>
<sequence>MTTTPDLRVGVGGAGQMGADHIQRITRVISGATVSAIVEPDAGRAAAAAAAPGSRAFASLDDALDASALEAVVIATPGQFHELVLVPALAAGLPVLCEKPLTPDSAEALRVLELEQTLDRPHIQLGFMRRFDDEYRALRELVVSGDAGELLFLRGVHRNPSVPESYTQSMLITDSVVHEFDVMPWLAGSPVASVEVKYPRRNDRAPERLREPILVLIELRNGVLVDVEMNVSVRFGYQVATEAVFQTGTARIGQPAGLQRWSDARFSIAEHTSFTTRFARAYDAQVQAWVDAVRDGSLVAGPNAWDGYLVALACEAGVRALSEPGPIAFAPAERPAFYA</sequence>
<feature type="chain" id="PRO_0000352574" description="Inositol 2-dehydrogenase">
    <location>
        <begin position="1"/>
        <end position="339"/>
    </location>
</feature>
<proteinExistence type="inferred from homology"/>